<accession>C1ESJ2</accession>
<keyword id="KW-0227">DNA damage</keyword>
<keyword id="KW-0233">DNA recombination</keyword>
<keyword id="KW-0234">DNA repair</keyword>
<feature type="chain" id="PRO_1000193357" description="DNA repair protein RecO">
    <location>
        <begin position="1"/>
        <end position="248"/>
    </location>
</feature>
<comment type="function">
    <text evidence="1">Involved in DNA repair and RecF pathway recombination.</text>
</comment>
<comment type="similarity">
    <text evidence="1">Belongs to the RecO family.</text>
</comment>
<protein>
    <recommendedName>
        <fullName evidence="1">DNA repair protein RecO</fullName>
    </recommendedName>
    <alternativeName>
        <fullName evidence="1">Recombination protein O</fullName>
    </alternativeName>
</protein>
<dbReference type="EMBL" id="CP001407">
    <property type="protein sequence ID" value="ACO29733.1"/>
    <property type="molecule type" value="Genomic_DNA"/>
</dbReference>
<dbReference type="RefSeq" id="WP_000487010.1">
    <property type="nucleotide sequence ID" value="NZ_CP009318.1"/>
</dbReference>
<dbReference type="SMR" id="C1ESJ2"/>
<dbReference type="GeneID" id="93006802"/>
<dbReference type="KEGG" id="bcx:BCA_4409"/>
<dbReference type="PATRIC" id="fig|572264.18.peg.4357"/>
<dbReference type="Proteomes" id="UP000002210">
    <property type="component" value="Chromosome"/>
</dbReference>
<dbReference type="GO" id="GO:0043590">
    <property type="term" value="C:bacterial nucleoid"/>
    <property type="evidence" value="ECO:0007669"/>
    <property type="project" value="TreeGrafter"/>
</dbReference>
<dbReference type="GO" id="GO:0006310">
    <property type="term" value="P:DNA recombination"/>
    <property type="evidence" value="ECO:0007669"/>
    <property type="project" value="UniProtKB-UniRule"/>
</dbReference>
<dbReference type="GO" id="GO:0006302">
    <property type="term" value="P:double-strand break repair"/>
    <property type="evidence" value="ECO:0007669"/>
    <property type="project" value="TreeGrafter"/>
</dbReference>
<dbReference type="Gene3D" id="2.40.50.140">
    <property type="entry name" value="Nucleic acid-binding proteins"/>
    <property type="match status" value="1"/>
</dbReference>
<dbReference type="Gene3D" id="1.20.1440.120">
    <property type="entry name" value="Recombination protein O, C-terminal domain"/>
    <property type="match status" value="1"/>
</dbReference>
<dbReference type="HAMAP" id="MF_00201">
    <property type="entry name" value="RecO"/>
    <property type="match status" value="1"/>
</dbReference>
<dbReference type="InterPro" id="IPR037278">
    <property type="entry name" value="ARFGAP/RecO"/>
</dbReference>
<dbReference type="InterPro" id="IPR022572">
    <property type="entry name" value="DNA_rep/recomb_RecO_N"/>
</dbReference>
<dbReference type="InterPro" id="IPR012340">
    <property type="entry name" value="NA-bd_OB-fold"/>
</dbReference>
<dbReference type="InterPro" id="IPR003717">
    <property type="entry name" value="RecO"/>
</dbReference>
<dbReference type="InterPro" id="IPR042242">
    <property type="entry name" value="RecO_C"/>
</dbReference>
<dbReference type="NCBIfam" id="TIGR00613">
    <property type="entry name" value="reco"/>
    <property type="match status" value="1"/>
</dbReference>
<dbReference type="PANTHER" id="PTHR33991">
    <property type="entry name" value="DNA REPAIR PROTEIN RECO"/>
    <property type="match status" value="1"/>
</dbReference>
<dbReference type="PANTHER" id="PTHR33991:SF1">
    <property type="entry name" value="DNA REPAIR PROTEIN RECO"/>
    <property type="match status" value="1"/>
</dbReference>
<dbReference type="Pfam" id="PF02565">
    <property type="entry name" value="RecO_C"/>
    <property type="match status" value="1"/>
</dbReference>
<dbReference type="Pfam" id="PF11967">
    <property type="entry name" value="RecO_N"/>
    <property type="match status" value="1"/>
</dbReference>
<dbReference type="SUPFAM" id="SSF57863">
    <property type="entry name" value="ArfGap/RecO-like zinc finger"/>
    <property type="match status" value="1"/>
</dbReference>
<dbReference type="SUPFAM" id="SSF50249">
    <property type="entry name" value="Nucleic acid-binding proteins"/>
    <property type="match status" value="1"/>
</dbReference>
<name>RECO_BACC3</name>
<sequence length="248" mass="28665">MFQKVEGIVIRTTDYGETNKIVTIFSRELGKVSAMARGAKKPKSRLASVSQLMTHGHFLIQMGSGLGTLQQGEIISTMKEIREDIFLTAYASFIVELTDKATEDKKHNPYLFEMLYQTLHYMCEGVDPEVLSLIYQTKMLPVLGMRPYFDTCAICHQETDFVAFSVREGGFLCSRHAEQDQYRIPVGEAVHKLLRLFYHFDLHRLGNVSVKDSTKKQMRLVLNTYYDEYCGIYLKSRRFLEQLDKFQI</sequence>
<evidence type="ECO:0000255" key="1">
    <source>
        <dbReference type="HAMAP-Rule" id="MF_00201"/>
    </source>
</evidence>
<organism>
    <name type="scientific">Bacillus cereus (strain 03BB102)</name>
    <dbReference type="NCBI Taxonomy" id="572264"/>
    <lineage>
        <taxon>Bacteria</taxon>
        <taxon>Bacillati</taxon>
        <taxon>Bacillota</taxon>
        <taxon>Bacilli</taxon>
        <taxon>Bacillales</taxon>
        <taxon>Bacillaceae</taxon>
        <taxon>Bacillus</taxon>
        <taxon>Bacillus cereus group</taxon>
    </lineage>
</organism>
<proteinExistence type="inferred from homology"/>
<gene>
    <name evidence="1" type="primary">recO</name>
    <name type="ordered locus">BCA_4409</name>
</gene>
<reference key="1">
    <citation type="submission" date="2009-02" db="EMBL/GenBank/DDBJ databases">
        <title>Genome sequence of Bacillus cereus 03BB102.</title>
        <authorList>
            <person name="Dodson R.J."/>
            <person name="Jackson P."/>
            <person name="Munk A.C."/>
            <person name="Brettin T."/>
            <person name="Bruce D."/>
            <person name="Detter C."/>
            <person name="Tapia R."/>
            <person name="Han C."/>
            <person name="Sutton G."/>
            <person name="Sims D."/>
        </authorList>
    </citation>
    <scope>NUCLEOTIDE SEQUENCE [LARGE SCALE GENOMIC DNA]</scope>
    <source>
        <strain>03BB102</strain>
    </source>
</reference>